<accession>P49085</accession>
<accession>Q6EIC3</accession>
<name>PSY1_MAIZE</name>
<evidence type="ECO:0000250" key="1"/>
<evidence type="ECO:0000255" key="2"/>
<evidence type="ECO:0000269" key="3">
    <source>
    </source>
</evidence>
<evidence type="ECO:0000269" key="4">
    <source>
    </source>
</evidence>
<evidence type="ECO:0000269" key="5">
    <source>
    </source>
</evidence>
<evidence type="ECO:0000303" key="6">
    <source>
    </source>
</evidence>
<evidence type="ECO:0000303" key="7">
    <source>
    </source>
</evidence>
<evidence type="ECO:0000305" key="8"/>
<evidence type="ECO:0000312" key="9">
    <source>
        <dbReference type="EMBL" id="AQK80705.1"/>
    </source>
</evidence>
<feature type="transit peptide" description="Chloroplast" evidence="2">
    <location>
        <begin position="1"/>
        <end position="62"/>
    </location>
</feature>
<feature type="chain" id="PRO_0000029858" description="Phytoene synthase 1, chloroplastic">
    <location>
        <begin position="63"/>
        <end position="410"/>
    </location>
</feature>
<feature type="sequence conflict" description="In Ref. 1; AAB60314." ref="1">
    <original>A</original>
    <variation>P</variation>
    <location>
        <position position="66"/>
    </location>
</feature>
<feature type="sequence conflict" description="In Ref. 1; AAB60314." ref="1">
    <original>T</original>
    <variation>N</variation>
    <location>
        <position position="344"/>
    </location>
</feature>
<dbReference type="EC" id="2.5.1.32" evidence="3"/>
<dbReference type="EMBL" id="U32636">
    <property type="protein sequence ID" value="AAB60314.1"/>
    <property type="molecule type" value="Genomic_DNA"/>
</dbReference>
<dbReference type="EMBL" id="AY324431">
    <property type="protein sequence ID" value="AAR08445.1"/>
    <property type="molecule type" value="Genomic_DNA"/>
</dbReference>
<dbReference type="EMBL" id="AY773475">
    <property type="protein sequence ID" value="AAX13806.1"/>
    <property type="molecule type" value="mRNA"/>
</dbReference>
<dbReference type="EMBL" id="CM000782">
    <property type="protein sequence ID" value="AQK80705.1"/>
    <property type="molecule type" value="Genomic_DNA"/>
</dbReference>
<dbReference type="EMBL" id="CM000782">
    <property type="protein sequence ID" value="AQK80706.1"/>
    <property type="molecule type" value="Genomic_DNA"/>
</dbReference>
<dbReference type="EMBL" id="BT034021">
    <property type="protein sequence ID" value="ACF79026.1"/>
    <property type="molecule type" value="mRNA"/>
</dbReference>
<dbReference type="PIR" id="S68307">
    <property type="entry name" value="S68307"/>
</dbReference>
<dbReference type="RefSeq" id="NP_001108124.2">
    <property type="nucleotide sequence ID" value="NM_001114652.2"/>
</dbReference>
<dbReference type="SMR" id="P49085"/>
<dbReference type="FunCoup" id="P49085">
    <property type="interactions" value="187"/>
</dbReference>
<dbReference type="STRING" id="4577.P49085"/>
<dbReference type="PaxDb" id="4577-GRMZM2G300348_P02"/>
<dbReference type="EnsemblPlants" id="Zm00001eb271860_T001">
    <property type="protein sequence ID" value="Zm00001eb271860_P001"/>
    <property type="gene ID" value="Zm00001eb271860"/>
</dbReference>
<dbReference type="GeneID" id="100136882"/>
<dbReference type="Gramene" id="Zm00001eb271860_T001">
    <property type="protein sequence ID" value="Zm00001eb271860_P001"/>
    <property type="gene ID" value="Zm00001eb271860"/>
</dbReference>
<dbReference type="KEGG" id="zma:100136882"/>
<dbReference type="MaizeGDB" id="66643"/>
<dbReference type="eggNOG" id="KOG1459">
    <property type="taxonomic scope" value="Eukaryota"/>
</dbReference>
<dbReference type="HOGENOM" id="CLU_037269_2_0_1"/>
<dbReference type="InParanoid" id="P49085"/>
<dbReference type="OMA" id="NEAYNRC"/>
<dbReference type="OrthoDB" id="6600518at2759"/>
<dbReference type="BioCyc" id="MetaCyc:GBWI-61910-MONOMER"/>
<dbReference type="BRENDA" id="2.5.1.32">
    <property type="organism ID" value="6752"/>
</dbReference>
<dbReference type="UniPathway" id="UPA00799">
    <property type="reaction ID" value="UER00773"/>
</dbReference>
<dbReference type="Proteomes" id="UP000007305">
    <property type="component" value="Chromosome 6"/>
</dbReference>
<dbReference type="ExpressionAtlas" id="P49085">
    <property type="expression patterns" value="baseline and differential"/>
</dbReference>
<dbReference type="GO" id="GO:0010287">
    <property type="term" value="C:plastoglobule"/>
    <property type="evidence" value="ECO:0007669"/>
    <property type="project" value="EnsemblPlants"/>
</dbReference>
<dbReference type="GO" id="GO:0046905">
    <property type="term" value="F:15-cis-phytoene synthase activity"/>
    <property type="evidence" value="ECO:0000318"/>
    <property type="project" value="GO_Central"/>
</dbReference>
<dbReference type="GO" id="GO:0004311">
    <property type="term" value="F:geranylgeranyl diphosphate synthase activity"/>
    <property type="evidence" value="ECO:0007669"/>
    <property type="project" value="InterPro"/>
</dbReference>
<dbReference type="GO" id="GO:0051996">
    <property type="term" value="F:squalene synthase [NAD(P)H] activity"/>
    <property type="evidence" value="ECO:0007669"/>
    <property type="project" value="InterPro"/>
</dbReference>
<dbReference type="GO" id="GO:0016117">
    <property type="term" value="P:carotenoid biosynthetic process"/>
    <property type="evidence" value="ECO:0000318"/>
    <property type="project" value="GO_Central"/>
</dbReference>
<dbReference type="CDD" id="cd00683">
    <property type="entry name" value="Trans_IPPS_HH"/>
    <property type="match status" value="1"/>
</dbReference>
<dbReference type="FunFam" id="1.10.600.10:FF:000004">
    <property type="entry name" value="Phytoene synthase chloroplastic"/>
    <property type="match status" value="1"/>
</dbReference>
<dbReference type="Gene3D" id="1.10.600.10">
    <property type="entry name" value="Farnesyl Diphosphate Synthase"/>
    <property type="match status" value="1"/>
</dbReference>
<dbReference type="InterPro" id="IPR008949">
    <property type="entry name" value="Isoprenoid_synthase_dom_sf"/>
</dbReference>
<dbReference type="InterPro" id="IPR002060">
    <property type="entry name" value="Squ/phyt_synthse"/>
</dbReference>
<dbReference type="InterPro" id="IPR019845">
    <property type="entry name" value="Squalene/phytoene_synthase_CS"/>
</dbReference>
<dbReference type="InterPro" id="IPR044843">
    <property type="entry name" value="Trans_IPPS_bact-type"/>
</dbReference>
<dbReference type="InterPro" id="IPR033904">
    <property type="entry name" value="Trans_IPPS_HH"/>
</dbReference>
<dbReference type="PANTHER" id="PTHR31480">
    <property type="entry name" value="BIFUNCTIONAL LYCOPENE CYCLASE/PHYTOENE SYNTHASE"/>
    <property type="match status" value="1"/>
</dbReference>
<dbReference type="Pfam" id="PF00494">
    <property type="entry name" value="SQS_PSY"/>
    <property type="match status" value="1"/>
</dbReference>
<dbReference type="SFLD" id="SFLDS00005">
    <property type="entry name" value="Isoprenoid_Synthase_Type_I"/>
    <property type="match status" value="1"/>
</dbReference>
<dbReference type="SFLD" id="SFLDG01212">
    <property type="entry name" value="Phytoene_synthase_like"/>
    <property type="match status" value="1"/>
</dbReference>
<dbReference type="SUPFAM" id="SSF48576">
    <property type="entry name" value="Terpenoid synthases"/>
    <property type="match status" value="1"/>
</dbReference>
<dbReference type="PROSITE" id="PS01044">
    <property type="entry name" value="SQUALEN_PHYTOEN_SYN_1"/>
    <property type="match status" value="1"/>
</dbReference>
<dbReference type="PROSITE" id="PS01045">
    <property type="entry name" value="SQUALEN_PHYTOEN_SYN_2"/>
    <property type="match status" value="1"/>
</dbReference>
<sequence>MAIILVRAASPGLSAADSISHQGTLQCSTLLKTKRPAARRWMPCSLLGLHPWEAGRPSPAVYSSLAVNPAGEAVVSSEQKVYDVVLKQAALLKRQLRTPVLDARPQDMDMPRNGLKEAYDRCGEICEEYAKTFYLGTMLMTEERRRAIWAIYVWCRRTDELVDGPNANYITPTALDRWEKRLEDLFTGRPYDMLDAALSDTISRFPIDIQPFRDMIEGMRSDLRKTRYNNFDELYMYCYYVAGTVGLMSVPVMGIATESKATTESVYSAALALGIANQLTNILRDVGEDARRGRIYLPQDELAQAGLSDEDIFKGVVTNRWRNFMKRQIKRARMFFEEAERGVTELSQASRWPVWASLLLYRQILDEIEANDYNNFTKRAYVGKGKKLLALPVAYGKSLLLPCSLRNGQT</sequence>
<keyword id="KW-0125">Carotenoid biosynthesis</keyword>
<keyword id="KW-0150">Chloroplast</keyword>
<keyword id="KW-0414">Isoprene biosynthesis</keyword>
<keyword id="KW-0934">Plastid</keyword>
<keyword id="KW-1185">Reference proteome</keyword>
<keyword id="KW-0808">Transferase</keyword>
<keyword id="KW-0809">Transit peptide</keyword>
<reference key="1">
    <citation type="journal article" date="1996" name="Genetics">
        <title>The y1 gene of maize codes for phytoene synthase.</title>
        <authorList>
            <person name="Buckner B."/>
            <person name="Sanmiguel P."/>
            <person name="Janick-Buckner D."/>
            <person name="Bennetzen J.L."/>
        </authorList>
    </citation>
    <scope>NUCLEOTIDE SEQUENCE [GENOMIC DNA]</scope>
    <scope>TISSUE SPECIFICITY</scope>
</reference>
<reference key="2">
    <citation type="journal article" date="2004" name="Plant Physiol.">
        <title>Gene duplication in the carotenoid biosynthetic pathway preceded evolution of the grasses.</title>
        <authorList>
            <person name="Gallagher C.E."/>
            <person name="Matthews P.D."/>
            <person name="Li F."/>
            <person name="Wurtzel E.T."/>
        </authorList>
    </citation>
    <scope>NUCLEOTIDE SEQUENCE [GENOMIC DNA]</scope>
    <scope>FUNCTION</scope>
    <scope>CATALYTIC ACTIVITY</scope>
    <scope>TISSUE SPECIFICITY</scope>
</reference>
<reference key="3">
    <citation type="submission" date="2004-10" db="EMBL/GenBank/DDBJ databases">
        <title>Zea mays phytoene synthase 1 (PSY1) mRNA, complete cds.</title>
        <authorList>
            <person name="Zhu C."/>
            <person name="Wurtzel E.T."/>
        </authorList>
    </citation>
    <scope>NUCLEOTIDE SEQUENCE [MRNA]</scope>
    <source>
        <tissue>Leaf</tissue>
    </source>
</reference>
<reference key="4">
    <citation type="journal article" date="2009" name="Science">
        <title>The B73 maize genome: complexity, diversity, and dynamics.</title>
        <authorList>
            <person name="Schnable P.S."/>
            <person name="Ware D."/>
            <person name="Fulton R.S."/>
            <person name="Stein J.C."/>
            <person name="Wei F."/>
            <person name="Pasternak S."/>
            <person name="Liang C."/>
            <person name="Zhang J."/>
            <person name="Fulton L."/>
            <person name="Graves T.A."/>
            <person name="Minx P."/>
            <person name="Reily A.D."/>
            <person name="Courtney L."/>
            <person name="Kruchowski S.S."/>
            <person name="Tomlinson C."/>
            <person name="Strong C."/>
            <person name="Delehaunty K."/>
            <person name="Fronick C."/>
            <person name="Courtney B."/>
            <person name="Rock S.M."/>
            <person name="Belter E."/>
            <person name="Du F."/>
            <person name="Kim K."/>
            <person name="Abbott R.M."/>
            <person name="Cotton M."/>
            <person name="Levy A."/>
            <person name="Marchetto P."/>
            <person name="Ochoa K."/>
            <person name="Jackson S.M."/>
            <person name="Gillam B."/>
            <person name="Chen W."/>
            <person name="Yan L."/>
            <person name="Higginbotham J."/>
            <person name="Cardenas M."/>
            <person name="Waligorski J."/>
            <person name="Applebaum E."/>
            <person name="Phelps L."/>
            <person name="Falcone J."/>
            <person name="Kanchi K."/>
            <person name="Thane T."/>
            <person name="Scimone A."/>
            <person name="Thane N."/>
            <person name="Henke J."/>
            <person name="Wang T."/>
            <person name="Ruppert J."/>
            <person name="Shah N."/>
            <person name="Rotter K."/>
            <person name="Hodges J."/>
            <person name="Ingenthron E."/>
            <person name="Cordes M."/>
            <person name="Kohlberg S."/>
            <person name="Sgro J."/>
            <person name="Delgado B."/>
            <person name="Mead K."/>
            <person name="Chinwalla A."/>
            <person name="Leonard S."/>
            <person name="Crouse K."/>
            <person name="Collura K."/>
            <person name="Kudrna D."/>
            <person name="Currie J."/>
            <person name="He R."/>
            <person name="Angelova A."/>
            <person name="Rajasekar S."/>
            <person name="Mueller T."/>
            <person name="Lomeli R."/>
            <person name="Scara G."/>
            <person name="Ko A."/>
            <person name="Delaney K."/>
            <person name="Wissotski M."/>
            <person name="Lopez G."/>
            <person name="Campos D."/>
            <person name="Braidotti M."/>
            <person name="Ashley E."/>
            <person name="Golser W."/>
            <person name="Kim H."/>
            <person name="Lee S."/>
            <person name="Lin J."/>
            <person name="Dujmic Z."/>
            <person name="Kim W."/>
            <person name="Talag J."/>
            <person name="Zuccolo A."/>
            <person name="Fan C."/>
            <person name="Sebastian A."/>
            <person name="Kramer M."/>
            <person name="Spiegel L."/>
            <person name="Nascimento L."/>
            <person name="Zutavern T."/>
            <person name="Miller B."/>
            <person name="Ambroise C."/>
            <person name="Muller S."/>
            <person name="Spooner W."/>
            <person name="Narechania A."/>
            <person name="Ren L."/>
            <person name="Wei S."/>
            <person name="Kumari S."/>
            <person name="Faga B."/>
            <person name="Levy M.J."/>
            <person name="McMahan L."/>
            <person name="Van Buren P."/>
            <person name="Vaughn M.W."/>
            <person name="Ying K."/>
            <person name="Yeh C.-T."/>
            <person name="Emrich S.J."/>
            <person name="Jia Y."/>
            <person name="Kalyanaraman A."/>
            <person name="Hsia A.-P."/>
            <person name="Barbazuk W.B."/>
            <person name="Baucom R.S."/>
            <person name="Brutnell T.P."/>
            <person name="Carpita N.C."/>
            <person name="Chaparro C."/>
            <person name="Chia J.-M."/>
            <person name="Deragon J.-M."/>
            <person name="Estill J.C."/>
            <person name="Fu Y."/>
            <person name="Jeddeloh J.A."/>
            <person name="Han Y."/>
            <person name="Lee H."/>
            <person name="Li P."/>
            <person name="Lisch D.R."/>
            <person name="Liu S."/>
            <person name="Liu Z."/>
            <person name="Nagel D.H."/>
            <person name="McCann M.C."/>
            <person name="SanMiguel P."/>
            <person name="Myers A.M."/>
            <person name="Nettleton D."/>
            <person name="Nguyen J."/>
            <person name="Penning B.W."/>
            <person name="Ponnala L."/>
            <person name="Schneider K.L."/>
            <person name="Schwartz D.C."/>
            <person name="Sharma A."/>
            <person name="Soderlund C."/>
            <person name="Springer N.M."/>
            <person name="Sun Q."/>
            <person name="Wang H."/>
            <person name="Waterman M."/>
            <person name="Westerman R."/>
            <person name="Wolfgruber T.K."/>
            <person name="Yang L."/>
            <person name="Yu Y."/>
            <person name="Zhang L."/>
            <person name="Zhou S."/>
            <person name="Zhu Q."/>
            <person name="Bennetzen J.L."/>
            <person name="Dawe R.K."/>
            <person name="Jiang J."/>
            <person name="Jiang N."/>
            <person name="Presting G.G."/>
            <person name="Wessler S.R."/>
            <person name="Aluru S."/>
            <person name="Martienssen R.A."/>
            <person name="Clifton S.W."/>
            <person name="McCombie W.R."/>
            <person name="Wing R.A."/>
            <person name="Wilson R.K."/>
        </authorList>
    </citation>
    <scope>NUCLEOTIDE SEQUENCE [LARGE SCALE GENOMIC DNA]</scope>
    <source>
        <strain>cv. B73</strain>
    </source>
</reference>
<reference key="5">
    <citation type="journal article" date="2009" name="PLoS Genet.">
        <title>Sequencing, mapping, and analysis of 27,455 maize full-length cDNAs.</title>
        <authorList>
            <person name="Soderlund C."/>
            <person name="Descour A."/>
            <person name="Kudrna D."/>
            <person name="Bomhoff M."/>
            <person name="Boyd L."/>
            <person name="Currie J."/>
            <person name="Angelova A."/>
            <person name="Collura K."/>
            <person name="Wissotski M."/>
            <person name="Ashley E."/>
            <person name="Morrow D."/>
            <person name="Fernandes J."/>
            <person name="Walbot V."/>
            <person name="Yu Y."/>
        </authorList>
    </citation>
    <scope>NUCLEOTIDE SEQUENCE [LARGE SCALE MRNA]</scope>
    <source>
        <strain>cv. B73</strain>
    </source>
</reference>
<reference key="6">
    <citation type="journal article" date="2012" name="Plant Cell">
        <title>Plastid localization of the key carotenoid enzyme phytoene synthase is altered by isozyme, allelic variation, and activity.</title>
        <authorList>
            <person name="Shumskaya M."/>
            <person name="Bradbury L.M."/>
            <person name="Monaco R.R."/>
            <person name="Wurtzel E.T."/>
        </authorList>
    </citation>
    <scope>SUBCELLULAR LOCATION</scope>
</reference>
<proteinExistence type="evidence at protein level"/>
<organism>
    <name type="scientific">Zea mays</name>
    <name type="common">Maize</name>
    <dbReference type="NCBI Taxonomy" id="4577"/>
    <lineage>
        <taxon>Eukaryota</taxon>
        <taxon>Viridiplantae</taxon>
        <taxon>Streptophyta</taxon>
        <taxon>Embryophyta</taxon>
        <taxon>Tracheophyta</taxon>
        <taxon>Spermatophyta</taxon>
        <taxon>Magnoliopsida</taxon>
        <taxon>Liliopsida</taxon>
        <taxon>Poales</taxon>
        <taxon>Poaceae</taxon>
        <taxon>PACMAD clade</taxon>
        <taxon>Panicoideae</taxon>
        <taxon>Andropogonodae</taxon>
        <taxon>Andropogoneae</taxon>
        <taxon>Tripsacinae</taxon>
        <taxon>Zea</taxon>
    </lineage>
</organism>
<comment type="function">
    <text evidence="3">Catalyzes the conversion of geranylgeranyl diphosphate to phytoene. Mediates the first committed step in carotenoid biosynthesis.</text>
</comment>
<comment type="catalytic activity">
    <reaction evidence="3">
        <text>2 (2E,6E,10E)-geranylgeranyl diphosphate = 15-cis-phytoene + 2 diphosphate</text>
        <dbReference type="Rhea" id="RHEA:34475"/>
        <dbReference type="ChEBI" id="CHEBI:27787"/>
        <dbReference type="ChEBI" id="CHEBI:33019"/>
        <dbReference type="ChEBI" id="CHEBI:58756"/>
        <dbReference type="EC" id="2.5.1.32"/>
    </reaction>
</comment>
<comment type="pathway">
    <text evidence="8">Carotenoid biosynthesis; phytoene biosynthesis; all-trans-phytoene from geranylgeranyl diphosphate: step 1/1.</text>
</comment>
<comment type="subunit">
    <text evidence="1">Monomer.</text>
</comment>
<comment type="subcellular location">
    <subcellularLocation>
        <location evidence="4">Plastid</location>
        <location evidence="4">Chloroplast stroma</location>
    </subcellularLocation>
    <text evidence="4">Forms punctuate spots in plastid stroma.</text>
</comment>
<comment type="tissue specificity">
    <text evidence="5">Expressed in embryos, endosperm and seedling leaves (PubMed:8722797). Expressed in leaves and endosperm (PubMed:8722797).</text>
</comment>
<comment type="similarity">
    <text evidence="8">Belongs to the phytoene/squalene synthase family.</text>
</comment>
<gene>
    <name evidence="6" type="primary">PSY1</name>
    <name evidence="7" type="synonym">Y1</name>
    <name evidence="9" type="ORF">ZEAMMB73_Zm00001d036345</name>
</gene>
<protein>
    <recommendedName>
        <fullName evidence="6">Phytoene synthase 1, chloroplastic</fullName>
        <shortName evidence="8">ZmPSY1</shortName>
        <ecNumber evidence="3">2.5.1.32</ecNumber>
    </recommendedName>
</protein>